<dbReference type="EMBL" id="L43967">
    <property type="protein sequence ID" value="AAC71533.1"/>
    <property type="molecule type" value="Genomic_DNA"/>
</dbReference>
<dbReference type="PIR" id="D64234">
    <property type="entry name" value="D64234"/>
</dbReference>
<dbReference type="RefSeq" id="WP_009885889.1">
    <property type="nucleotide sequence ID" value="NC_000908.2"/>
</dbReference>
<dbReference type="SMR" id="P47553"/>
<dbReference type="FunCoup" id="P47553">
    <property type="interactions" value="208"/>
</dbReference>
<dbReference type="STRING" id="243273.MG_311"/>
<dbReference type="GeneID" id="88282474"/>
<dbReference type="KEGG" id="mge:MG_311"/>
<dbReference type="eggNOG" id="COG0522">
    <property type="taxonomic scope" value="Bacteria"/>
</dbReference>
<dbReference type="HOGENOM" id="CLU_092403_0_1_14"/>
<dbReference type="InParanoid" id="P47553"/>
<dbReference type="OrthoDB" id="9803672at2"/>
<dbReference type="BioCyc" id="MGEN243273:G1GJ2-380-MONOMER"/>
<dbReference type="Proteomes" id="UP000000807">
    <property type="component" value="Chromosome"/>
</dbReference>
<dbReference type="GO" id="GO:0015935">
    <property type="term" value="C:small ribosomal subunit"/>
    <property type="evidence" value="ECO:0000318"/>
    <property type="project" value="GO_Central"/>
</dbReference>
<dbReference type="GO" id="GO:0019843">
    <property type="term" value="F:rRNA binding"/>
    <property type="evidence" value="ECO:0000318"/>
    <property type="project" value="GO_Central"/>
</dbReference>
<dbReference type="GO" id="GO:0003735">
    <property type="term" value="F:structural constituent of ribosome"/>
    <property type="evidence" value="ECO:0000318"/>
    <property type="project" value="GO_Central"/>
</dbReference>
<dbReference type="GO" id="GO:0042274">
    <property type="term" value="P:ribosomal small subunit biogenesis"/>
    <property type="evidence" value="ECO:0000318"/>
    <property type="project" value="GO_Central"/>
</dbReference>
<dbReference type="GO" id="GO:0006412">
    <property type="term" value="P:translation"/>
    <property type="evidence" value="ECO:0007669"/>
    <property type="project" value="UniProtKB-UniRule"/>
</dbReference>
<dbReference type="CDD" id="cd00165">
    <property type="entry name" value="S4"/>
    <property type="match status" value="1"/>
</dbReference>
<dbReference type="FunFam" id="3.10.290.10:FF:000001">
    <property type="entry name" value="30S ribosomal protein S4"/>
    <property type="match status" value="1"/>
</dbReference>
<dbReference type="Gene3D" id="1.10.1050.10">
    <property type="entry name" value="Ribosomal Protein S4 Delta 41, Chain A, domain 1"/>
    <property type="match status" value="1"/>
</dbReference>
<dbReference type="Gene3D" id="3.10.290.10">
    <property type="entry name" value="RNA-binding S4 domain"/>
    <property type="match status" value="1"/>
</dbReference>
<dbReference type="HAMAP" id="MF_01306_B">
    <property type="entry name" value="Ribosomal_uS4_B"/>
    <property type="match status" value="1"/>
</dbReference>
<dbReference type="InterPro" id="IPR022801">
    <property type="entry name" value="Ribosomal_uS4"/>
</dbReference>
<dbReference type="InterPro" id="IPR005709">
    <property type="entry name" value="Ribosomal_uS4_bac-type"/>
</dbReference>
<dbReference type="InterPro" id="IPR018079">
    <property type="entry name" value="Ribosomal_uS4_CS"/>
</dbReference>
<dbReference type="InterPro" id="IPR001912">
    <property type="entry name" value="Ribosomal_uS4_N"/>
</dbReference>
<dbReference type="InterPro" id="IPR002942">
    <property type="entry name" value="S4_RNA-bd"/>
</dbReference>
<dbReference type="InterPro" id="IPR036986">
    <property type="entry name" value="S4_RNA-bd_sf"/>
</dbReference>
<dbReference type="NCBIfam" id="NF003717">
    <property type="entry name" value="PRK05327.1"/>
    <property type="match status" value="1"/>
</dbReference>
<dbReference type="NCBIfam" id="TIGR01017">
    <property type="entry name" value="rpsD_bact"/>
    <property type="match status" value="1"/>
</dbReference>
<dbReference type="PANTHER" id="PTHR11831">
    <property type="entry name" value="30S 40S RIBOSOMAL PROTEIN"/>
    <property type="match status" value="1"/>
</dbReference>
<dbReference type="PANTHER" id="PTHR11831:SF4">
    <property type="entry name" value="SMALL RIBOSOMAL SUBUNIT PROTEIN US4M"/>
    <property type="match status" value="1"/>
</dbReference>
<dbReference type="Pfam" id="PF00163">
    <property type="entry name" value="Ribosomal_S4"/>
    <property type="match status" value="1"/>
</dbReference>
<dbReference type="Pfam" id="PF01479">
    <property type="entry name" value="S4"/>
    <property type="match status" value="1"/>
</dbReference>
<dbReference type="SMART" id="SM01390">
    <property type="entry name" value="Ribosomal_S4"/>
    <property type="match status" value="1"/>
</dbReference>
<dbReference type="SMART" id="SM00363">
    <property type="entry name" value="S4"/>
    <property type="match status" value="1"/>
</dbReference>
<dbReference type="SUPFAM" id="SSF55174">
    <property type="entry name" value="Alpha-L RNA-binding motif"/>
    <property type="match status" value="1"/>
</dbReference>
<dbReference type="PROSITE" id="PS00632">
    <property type="entry name" value="RIBOSOMAL_S4"/>
    <property type="match status" value="1"/>
</dbReference>
<dbReference type="PROSITE" id="PS50889">
    <property type="entry name" value="S4"/>
    <property type="match status" value="1"/>
</dbReference>
<reference key="1">
    <citation type="journal article" date="1995" name="Science">
        <title>The minimal gene complement of Mycoplasma genitalium.</title>
        <authorList>
            <person name="Fraser C.M."/>
            <person name="Gocayne J.D."/>
            <person name="White O."/>
            <person name="Adams M.D."/>
            <person name="Clayton R.A."/>
            <person name="Fleischmann R.D."/>
            <person name="Bult C.J."/>
            <person name="Kerlavage A.R."/>
            <person name="Sutton G.G."/>
            <person name="Kelley J.M."/>
            <person name="Fritchman J.L."/>
            <person name="Weidman J.F."/>
            <person name="Small K.V."/>
            <person name="Sandusky M."/>
            <person name="Fuhrmann J.L."/>
            <person name="Nguyen D.T."/>
            <person name="Utterback T.R."/>
            <person name="Saudek D.M."/>
            <person name="Phillips C.A."/>
            <person name="Merrick J.M."/>
            <person name="Tomb J.-F."/>
            <person name="Dougherty B.A."/>
            <person name="Bott K.F."/>
            <person name="Hu P.-C."/>
            <person name="Lucier T.S."/>
            <person name="Peterson S.N."/>
            <person name="Smith H.O."/>
            <person name="Hutchison C.A. III"/>
            <person name="Venter J.C."/>
        </authorList>
    </citation>
    <scope>NUCLEOTIDE SEQUENCE [LARGE SCALE GENOMIC DNA]</scope>
    <source>
        <strain>ATCC 33530 / DSM 19775 / NCTC 10195 / G37</strain>
    </source>
</reference>
<evidence type="ECO:0000255" key="1">
    <source>
        <dbReference type="HAMAP-Rule" id="MF_01306"/>
    </source>
</evidence>
<evidence type="ECO:0000305" key="2"/>
<sequence length="205" mass="23947">MKYTGSIFKRSRRLGFSLLENNKEFSKGKKRKSIPGQHGNRFRSSTLSGYAQQLQEKQRMQYMYGITDKQFRRLFRFVLKQKGNLTVNLFRVLESRLDNIVYRMGFAPTRKSARQMVNHGHVILNDQTVDTPSIIINPGDKVRLKARITKSPLVKNFIENSVISSFVETNKKAFEGTYIRFPERSELPAGINESYVVEWYKRLVK</sequence>
<accession>P47553</accession>
<proteinExistence type="inferred from homology"/>
<comment type="function">
    <text evidence="1">One of the primary rRNA binding proteins, it binds directly to 16S rRNA where it nucleates assembly of the body of the 30S subunit.</text>
</comment>
<comment type="function">
    <text evidence="1">With S5 and S12 plays an important role in translational accuracy.</text>
</comment>
<comment type="subunit">
    <text evidence="1">Part of the 30S ribosomal subunit. Contacts protein S5. The interaction surface between S4 and S5 is involved in control of translational fidelity.</text>
</comment>
<comment type="similarity">
    <text evidence="1">Belongs to the universal ribosomal protein uS4 family.</text>
</comment>
<name>RS4_MYCGE</name>
<protein>
    <recommendedName>
        <fullName evidence="1">Small ribosomal subunit protein uS4</fullName>
    </recommendedName>
    <alternativeName>
        <fullName evidence="2">30S ribosomal protein S4</fullName>
    </alternativeName>
</protein>
<organism>
    <name type="scientific">Mycoplasma genitalium (strain ATCC 33530 / DSM 19775 / NCTC 10195 / G37)</name>
    <name type="common">Mycoplasmoides genitalium</name>
    <dbReference type="NCBI Taxonomy" id="243273"/>
    <lineage>
        <taxon>Bacteria</taxon>
        <taxon>Bacillati</taxon>
        <taxon>Mycoplasmatota</taxon>
        <taxon>Mycoplasmoidales</taxon>
        <taxon>Mycoplasmoidaceae</taxon>
        <taxon>Mycoplasmoides</taxon>
    </lineage>
</organism>
<feature type="chain" id="PRO_0000132413" description="Small ribosomal subunit protein uS4">
    <location>
        <begin position="1"/>
        <end position="205"/>
    </location>
</feature>
<feature type="domain" description="S4 RNA-binding" evidence="1">
    <location>
        <begin position="95"/>
        <end position="158"/>
    </location>
</feature>
<gene>
    <name evidence="1" type="primary">rpsD</name>
    <name evidence="1" type="synonym">rps4</name>
    <name type="ordered locus">MG311</name>
</gene>
<keyword id="KW-1185">Reference proteome</keyword>
<keyword id="KW-0687">Ribonucleoprotein</keyword>
<keyword id="KW-0689">Ribosomal protein</keyword>
<keyword id="KW-0694">RNA-binding</keyword>
<keyword id="KW-0699">rRNA-binding</keyword>